<name>GCST_CHLTE</name>
<accession>Q8KBJ9</accession>
<dbReference type="EC" id="2.1.2.10" evidence="1"/>
<dbReference type="EMBL" id="AE006470">
    <property type="protein sequence ID" value="AAM73009.1"/>
    <property type="molecule type" value="Genomic_DNA"/>
</dbReference>
<dbReference type="RefSeq" id="NP_662667.1">
    <property type="nucleotide sequence ID" value="NC_002932.3"/>
</dbReference>
<dbReference type="RefSeq" id="WP_010933448.1">
    <property type="nucleotide sequence ID" value="NC_002932.3"/>
</dbReference>
<dbReference type="SMR" id="Q8KBJ9"/>
<dbReference type="STRING" id="194439.CT1788"/>
<dbReference type="EnsemblBacteria" id="AAM73009">
    <property type="protein sequence ID" value="AAM73009"/>
    <property type="gene ID" value="CT1788"/>
</dbReference>
<dbReference type="KEGG" id="cte:CT1788"/>
<dbReference type="PATRIC" id="fig|194439.7.peg.1622"/>
<dbReference type="eggNOG" id="COG0404">
    <property type="taxonomic scope" value="Bacteria"/>
</dbReference>
<dbReference type="HOGENOM" id="CLU_007884_10_2_10"/>
<dbReference type="OrthoDB" id="9774591at2"/>
<dbReference type="Proteomes" id="UP000001007">
    <property type="component" value="Chromosome"/>
</dbReference>
<dbReference type="GO" id="GO:0005829">
    <property type="term" value="C:cytosol"/>
    <property type="evidence" value="ECO:0007669"/>
    <property type="project" value="TreeGrafter"/>
</dbReference>
<dbReference type="GO" id="GO:0005960">
    <property type="term" value="C:glycine cleavage complex"/>
    <property type="evidence" value="ECO:0007669"/>
    <property type="project" value="InterPro"/>
</dbReference>
<dbReference type="GO" id="GO:0004047">
    <property type="term" value="F:aminomethyltransferase activity"/>
    <property type="evidence" value="ECO:0007669"/>
    <property type="project" value="UniProtKB-UniRule"/>
</dbReference>
<dbReference type="GO" id="GO:0008483">
    <property type="term" value="F:transaminase activity"/>
    <property type="evidence" value="ECO:0007669"/>
    <property type="project" value="UniProtKB-KW"/>
</dbReference>
<dbReference type="GO" id="GO:0019464">
    <property type="term" value="P:glycine decarboxylation via glycine cleavage system"/>
    <property type="evidence" value="ECO:0007669"/>
    <property type="project" value="UniProtKB-UniRule"/>
</dbReference>
<dbReference type="FunFam" id="3.30.70.1400:FF:000001">
    <property type="entry name" value="Aminomethyltransferase"/>
    <property type="match status" value="1"/>
</dbReference>
<dbReference type="Gene3D" id="2.40.30.110">
    <property type="entry name" value="Aminomethyltransferase beta-barrel domains"/>
    <property type="match status" value="1"/>
</dbReference>
<dbReference type="Gene3D" id="3.30.70.1400">
    <property type="entry name" value="Aminomethyltransferase beta-barrel domains"/>
    <property type="match status" value="1"/>
</dbReference>
<dbReference type="Gene3D" id="4.10.1250.10">
    <property type="entry name" value="Aminomethyltransferase fragment"/>
    <property type="match status" value="1"/>
</dbReference>
<dbReference type="Gene3D" id="3.30.1360.120">
    <property type="entry name" value="Probable tRNA modification gtpase trme, domain 1"/>
    <property type="match status" value="1"/>
</dbReference>
<dbReference type="HAMAP" id="MF_00259">
    <property type="entry name" value="GcvT"/>
    <property type="match status" value="1"/>
</dbReference>
<dbReference type="InterPro" id="IPR006223">
    <property type="entry name" value="GCS_T"/>
</dbReference>
<dbReference type="InterPro" id="IPR022903">
    <property type="entry name" value="GCS_T_bac"/>
</dbReference>
<dbReference type="InterPro" id="IPR013977">
    <property type="entry name" value="GCST_C"/>
</dbReference>
<dbReference type="InterPro" id="IPR006222">
    <property type="entry name" value="GCV_T_N"/>
</dbReference>
<dbReference type="InterPro" id="IPR028896">
    <property type="entry name" value="GcvT/YgfZ/DmdA"/>
</dbReference>
<dbReference type="InterPro" id="IPR029043">
    <property type="entry name" value="GcvT/YgfZ_C"/>
</dbReference>
<dbReference type="InterPro" id="IPR027266">
    <property type="entry name" value="TrmE/GcvT_dom1"/>
</dbReference>
<dbReference type="NCBIfam" id="TIGR00528">
    <property type="entry name" value="gcvT"/>
    <property type="match status" value="1"/>
</dbReference>
<dbReference type="NCBIfam" id="NF001567">
    <property type="entry name" value="PRK00389.1"/>
    <property type="match status" value="1"/>
</dbReference>
<dbReference type="PANTHER" id="PTHR43757">
    <property type="entry name" value="AMINOMETHYLTRANSFERASE"/>
    <property type="match status" value="1"/>
</dbReference>
<dbReference type="PANTHER" id="PTHR43757:SF2">
    <property type="entry name" value="AMINOMETHYLTRANSFERASE, MITOCHONDRIAL"/>
    <property type="match status" value="1"/>
</dbReference>
<dbReference type="Pfam" id="PF01571">
    <property type="entry name" value="GCV_T"/>
    <property type="match status" value="1"/>
</dbReference>
<dbReference type="Pfam" id="PF08669">
    <property type="entry name" value="GCV_T_C"/>
    <property type="match status" value="1"/>
</dbReference>
<dbReference type="PIRSF" id="PIRSF006487">
    <property type="entry name" value="GcvT"/>
    <property type="match status" value="1"/>
</dbReference>
<dbReference type="SUPFAM" id="SSF101790">
    <property type="entry name" value="Aminomethyltransferase beta-barrel domain"/>
    <property type="match status" value="1"/>
</dbReference>
<dbReference type="SUPFAM" id="SSF103025">
    <property type="entry name" value="Folate-binding domain"/>
    <property type="match status" value="1"/>
</dbReference>
<feature type="chain" id="PRO_0000122551" description="Aminomethyltransferase">
    <location>
        <begin position="1"/>
        <end position="365"/>
    </location>
</feature>
<organism>
    <name type="scientific">Chlorobaculum tepidum (strain ATCC 49652 / DSM 12025 / NBRC 103806 / TLS)</name>
    <name type="common">Chlorobium tepidum</name>
    <dbReference type="NCBI Taxonomy" id="194439"/>
    <lineage>
        <taxon>Bacteria</taxon>
        <taxon>Pseudomonadati</taxon>
        <taxon>Chlorobiota</taxon>
        <taxon>Chlorobiia</taxon>
        <taxon>Chlorobiales</taxon>
        <taxon>Chlorobiaceae</taxon>
        <taxon>Chlorobaculum</taxon>
    </lineage>
</organism>
<protein>
    <recommendedName>
        <fullName evidence="1">Aminomethyltransferase</fullName>
        <ecNumber evidence="1">2.1.2.10</ecNumber>
    </recommendedName>
    <alternativeName>
        <fullName evidence="1">Glycine cleavage system T protein</fullName>
    </alternativeName>
</protein>
<evidence type="ECO:0000255" key="1">
    <source>
        <dbReference type="HAMAP-Rule" id="MF_00259"/>
    </source>
</evidence>
<reference key="1">
    <citation type="journal article" date="2002" name="Proc. Natl. Acad. Sci. U.S.A.">
        <title>The complete genome sequence of Chlorobium tepidum TLS, a photosynthetic, anaerobic, green-sulfur bacterium.</title>
        <authorList>
            <person name="Eisen J.A."/>
            <person name="Nelson K.E."/>
            <person name="Paulsen I.T."/>
            <person name="Heidelberg J.F."/>
            <person name="Wu M."/>
            <person name="Dodson R.J."/>
            <person name="DeBoy R.T."/>
            <person name="Gwinn M.L."/>
            <person name="Nelson W.C."/>
            <person name="Haft D.H."/>
            <person name="Hickey E.K."/>
            <person name="Peterson J.D."/>
            <person name="Durkin A.S."/>
            <person name="Kolonay J.F."/>
            <person name="Yang F."/>
            <person name="Holt I.E."/>
            <person name="Umayam L.A."/>
            <person name="Mason T.M."/>
            <person name="Brenner M."/>
            <person name="Shea T.P."/>
            <person name="Parksey D.S."/>
            <person name="Nierman W.C."/>
            <person name="Feldblyum T.V."/>
            <person name="Hansen C.L."/>
            <person name="Craven M.B."/>
            <person name="Radune D."/>
            <person name="Vamathevan J.J."/>
            <person name="Khouri H.M."/>
            <person name="White O."/>
            <person name="Gruber T.M."/>
            <person name="Ketchum K.A."/>
            <person name="Venter J.C."/>
            <person name="Tettelin H."/>
            <person name="Bryant D.A."/>
            <person name="Fraser C.M."/>
        </authorList>
    </citation>
    <scope>NUCLEOTIDE SEQUENCE [LARGE SCALE GENOMIC DNA]</scope>
    <source>
        <strain>ATCC 49652 / DSM 12025 / NBRC 103806 / TLS</strain>
    </source>
</reference>
<keyword id="KW-0032">Aminotransferase</keyword>
<keyword id="KW-1185">Reference proteome</keyword>
<keyword id="KW-0808">Transferase</keyword>
<gene>
    <name evidence="1" type="primary">gcvT</name>
    <name type="ordered locus">CT1788</name>
</gene>
<comment type="function">
    <text evidence="1">The glycine cleavage system catalyzes the degradation of glycine.</text>
</comment>
<comment type="catalytic activity">
    <reaction evidence="1">
        <text>N(6)-[(R)-S(8)-aminomethyldihydrolipoyl]-L-lysyl-[protein] + (6S)-5,6,7,8-tetrahydrofolate = N(6)-[(R)-dihydrolipoyl]-L-lysyl-[protein] + (6R)-5,10-methylene-5,6,7,8-tetrahydrofolate + NH4(+)</text>
        <dbReference type="Rhea" id="RHEA:16945"/>
        <dbReference type="Rhea" id="RHEA-COMP:10475"/>
        <dbReference type="Rhea" id="RHEA-COMP:10492"/>
        <dbReference type="ChEBI" id="CHEBI:15636"/>
        <dbReference type="ChEBI" id="CHEBI:28938"/>
        <dbReference type="ChEBI" id="CHEBI:57453"/>
        <dbReference type="ChEBI" id="CHEBI:83100"/>
        <dbReference type="ChEBI" id="CHEBI:83143"/>
        <dbReference type="EC" id="2.1.2.10"/>
    </reaction>
</comment>
<comment type="subunit">
    <text evidence="1">The glycine cleavage system is composed of four proteins: P, T, L and H.</text>
</comment>
<comment type="similarity">
    <text evidence="1">Belongs to the GcvT family.</text>
</comment>
<sequence length="365" mass="40139">MKKTALSAWHEAAGAKMIDFGGFLMPVQYTGIIAEHKAVREAAGLFDVSHMGNFYVRGARALEFLQYMTTNDLAKIVDGQAQYTLMLYPDGGIVDDLIIYRVSADTFFLIVNASNCEKDFDWLSSHIGQFEGVALENHTSELSLIALQGPKSFDILARVFPGAGIDKLGSFHFIKLPFEGAEIMVARTGYTGEAGVEICLPNERAVALWSALMEAGKSDGIQPIGLGARDTLRLEMGYSLYGHEIERDVNPLEARLKWVVKLNKPNFIGKQACEQVEINPRKSVVGFSLEGRAIPRQHFKVYNSDKQEIGEVCSGTVSPTLQEPIGTASLLLDYAQPGTPIFVEIRGTMQPGAVRRLPFVHADRP</sequence>
<proteinExistence type="inferred from homology"/>